<gene>
    <name type="primary">lid2</name>
    <name type="ORF">SPBP19A11.06</name>
    <name type="ORF">SPBP4H10.01</name>
</gene>
<organism>
    <name type="scientific">Schizosaccharomyces pombe (strain 972 / ATCC 24843)</name>
    <name type="common">Fission yeast</name>
    <dbReference type="NCBI Taxonomy" id="284812"/>
    <lineage>
        <taxon>Eukaryota</taxon>
        <taxon>Fungi</taxon>
        <taxon>Dikarya</taxon>
        <taxon>Ascomycota</taxon>
        <taxon>Taphrinomycotina</taxon>
        <taxon>Schizosaccharomycetes</taxon>
        <taxon>Schizosaccharomycetales</taxon>
        <taxon>Schizosaccharomycetaceae</taxon>
        <taxon>Schizosaccharomyces</taxon>
    </lineage>
</organism>
<accession>Q9HDV4</accession>
<accession>Q9P7E6</accession>
<protein>
    <recommendedName>
        <fullName>Lid2 complex component lid2</fullName>
        <shortName>Lid2C component lid2</shortName>
    </recommendedName>
</protein>
<evidence type="ECO:0000255" key="1"/>
<evidence type="ECO:0000255" key="2">
    <source>
        <dbReference type="PROSITE-ProRule" id="PRU00146"/>
    </source>
</evidence>
<evidence type="ECO:0000255" key="3">
    <source>
        <dbReference type="PROSITE-ProRule" id="PRU00355"/>
    </source>
</evidence>
<evidence type="ECO:0000255" key="4">
    <source>
        <dbReference type="PROSITE-ProRule" id="PRU00537"/>
    </source>
</evidence>
<evidence type="ECO:0000255" key="5">
    <source>
        <dbReference type="PROSITE-ProRule" id="PRU00538"/>
    </source>
</evidence>
<evidence type="ECO:0000256" key="6">
    <source>
        <dbReference type="SAM" id="MobiDB-lite"/>
    </source>
</evidence>
<evidence type="ECO:0000269" key="7">
    <source>
    </source>
</evidence>
<evidence type="ECO:0000269" key="8">
    <source>
    </source>
</evidence>
<evidence type="ECO:0000269" key="9">
    <source>
    </source>
</evidence>
<evidence type="ECO:0000305" key="10"/>
<evidence type="ECO:0000312" key="11">
    <source>
        <dbReference type="EMBL" id="CAC19756.1"/>
    </source>
</evidence>
<dbReference type="EMBL" id="CU329671">
    <property type="protein sequence ID" value="CAC19756.1"/>
    <property type="molecule type" value="Genomic_DNA"/>
</dbReference>
<dbReference type="PIR" id="T50313">
    <property type="entry name" value="T50313"/>
</dbReference>
<dbReference type="RefSeq" id="NP_596174.1">
    <property type="nucleotide sequence ID" value="NM_001022094.2"/>
</dbReference>
<dbReference type="SMR" id="Q9HDV4"/>
<dbReference type="BioGRID" id="277811">
    <property type="interactions" value="7"/>
</dbReference>
<dbReference type="FunCoup" id="Q9HDV4">
    <property type="interactions" value="625"/>
</dbReference>
<dbReference type="IntAct" id="Q9HDV4">
    <property type="interactions" value="7"/>
</dbReference>
<dbReference type="STRING" id="284812.Q9HDV4"/>
<dbReference type="iPTMnet" id="Q9HDV4"/>
<dbReference type="PaxDb" id="4896-SPBP19A11.06.1"/>
<dbReference type="EnsemblFungi" id="SPBP19A11.06.1">
    <property type="protein sequence ID" value="SPBP19A11.06.1:pep"/>
    <property type="gene ID" value="SPBP19A11.06"/>
</dbReference>
<dbReference type="GeneID" id="2541299"/>
<dbReference type="KEGG" id="spo:2541299"/>
<dbReference type="PomBase" id="SPBP19A11.06">
    <property type="gene designation" value="lid2"/>
</dbReference>
<dbReference type="VEuPathDB" id="FungiDB:SPBP19A11.06"/>
<dbReference type="eggNOG" id="KOG1246">
    <property type="taxonomic scope" value="Eukaryota"/>
</dbReference>
<dbReference type="HOGENOM" id="CLU_000991_0_0_1"/>
<dbReference type="InParanoid" id="Q9HDV4"/>
<dbReference type="OMA" id="PRCDIGM"/>
<dbReference type="PhylomeDB" id="Q9HDV4"/>
<dbReference type="Reactome" id="R-SPO-3214842">
    <property type="pathway name" value="HDMs demethylate histones"/>
</dbReference>
<dbReference type="PRO" id="PR:Q9HDV4"/>
<dbReference type="Proteomes" id="UP000002485">
    <property type="component" value="Chromosome II"/>
</dbReference>
<dbReference type="GO" id="GO:0000785">
    <property type="term" value="C:chromatin"/>
    <property type="evidence" value="ECO:0000318"/>
    <property type="project" value="GO_Central"/>
</dbReference>
<dbReference type="GO" id="GO:0048189">
    <property type="term" value="C:Lid2 complex"/>
    <property type="evidence" value="ECO:0000314"/>
    <property type="project" value="PomBase"/>
</dbReference>
<dbReference type="GO" id="GO:0031934">
    <property type="term" value="C:mating-type region heterochromatin"/>
    <property type="evidence" value="ECO:0000314"/>
    <property type="project" value="PomBase"/>
</dbReference>
<dbReference type="GO" id="GO:0005634">
    <property type="term" value="C:nucleus"/>
    <property type="evidence" value="ECO:0000314"/>
    <property type="project" value="PomBase"/>
</dbReference>
<dbReference type="GO" id="GO:0005721">
    <property type="term" value="C:pericentric heterochromatin"/>
    <property type="evidence" value="ECO:0000314"/>
    <property type="project" value="PomBase"/>
</dbReference>
<dbReference type="GO" id="GO:0003682">
    <property type="term" value="F:chromatin binding"/>
    <property type="evidence" value="ECO:0000314"/>
    <property type="project" value="PomBase"/>
</dbReference>
<dbReference type="GO" id="GO:0003677">
    <property type="term" value="F:DNA binding"/>
    <property type="evidence" value="ECO:0000255"/>
    <property type="project" value="PomBase"/>
</dbReference>
<dbReference type="GO" id="GO:0034647">
    <property type="term" value="F:histone H3K4me/H3K4me2/H3K4me3 demethylase activity"/>
    <property type="evidence" value="ECO:0000269"/>
    <property type="project" value="PomBase"/>
</dbReference>
<dbReference type="GO" id="GO:0008270">
    <property type="term" value="F:zinc ion binding"/>
    <property type="evidence" value="ECO:0007669"/>
    <property type="project" value="UniProtKB-KW"/>
</dbReference>
<dbReference type="GO" id="GO:0006338">
    <property type="term" value="P:chromatin remodeling"/>
    <property type="evidence" value="ECO:0000318"/>
    <property type="project" value="GO_Central"/>
</dbReference>
<dbReference type="GO" id="GO:0033696">
    <property type="term" value="P:heterochromatin boundary formation"/>
    <property type="evidence" value="ECO:0000315"/>
    <property type="project" value="PomBase"/>
</dbReference>
<dbReference type="GO" id="GO:0006355">
    <property type="term" value="P:regulation of DNA-templated transcription"/>
    <property type="evidence" value="ECO:0000318"/>
    <property type="project" value="GO_Central"/>
</dbReference>
<dbReference type="GO" id="GO:0031048">
    <property type="term" value="P:regulatory ncRNA-mediated heterochromatin formation"/>
    <property type="evidence" value="ECO:0000315"/>
    <property type="project" value="PomBase"/>
</dbReference>
<dbReference type="CDD" id="cd16100">
    <property type="entry name" value="ARID"/>
    <property type="match status" value="1"/>
</dbReference>
<dbReference type="CDD" id="cd15519">
    <property type="entry name" value="PHD1_Lid2p_like"/>
    <property type="match status" value="1"/>
</dbReference>
<dbReference type="CDD" id="cd15520">
    <property type="entry name" value="PHD3_Lid2p_like"/>
    <property type="match status" value="1"/>
</dbReference>
<dbReference type="CDD" id="cd15518">
    <property type="entry name" value="PHD_Ecm5p_Lid2p_like"/>
    <property type="match status" value="1"/>
</dbReference>
<dbReference type="FunFam" id="2.60.120.650:FF:000077">
    <property type="entry name" value="Multicopy suppressor of chk1 protein 1"/>
    <property type="match status" value="1"/>
</dbReference>
<dbReference type="FunFam" id="3.30.40.10:FF:001132">
    <property type="entry name" value="Multicopy suppressor of chk1 protein 1"/>
    <property type="match status" value="1"/>
</dbReference>
<dbReference type="Gene3D" id="1.10.150.60">
    <property type="entry name" value="ARID DNA-binding domain"/>
    <property type="match status" value="1"/>
</dbReference>
<dbReference type="Gene3D" id="2.60.120.650">
    <property type="entry name" value="Cupin"/>
    <property type="match status" value="2"/>
</dbReference>
<dbReference type="Gene3D" id="3.30.40.10">
    <property type="entry name" value="Zinc/RING finger domain, C3HC4 (zinc finger)"/>
    <property type="match status" value="2"/>
</dbReference>
<dbReference type="InterPro" id="IPR001606">
    <property type="entry name" value="ARID_dom"/>
</dbReference>
<dbReference type="InterPro" id="IPR036431">
    <property type="entry name" value="ARID_dom_sf"/>
</dbReference>
<dbReference type="InterPro" id="IPR003347">
    <property type="entry name" value="JmjC_dom"/>
</dbReference>
<dbReference type="InterPro" id="IPR013637">
    <property type="entry name" value="Lys_sp_deMease-like_dom"/>
</dbReference>
<dbReference type="InterPro" id="IPR019786">
    <property type="entry name" value="Zinc_finger_PHD-type_CS"/>
</dbReference>
<dbReference type="InterPro" id="IPR004198">
    <property type="entry name" value="Znf_C5HC2"/>
</dbReference>
<dbReference type="InterPro" id="IPR011011">
    <property type="entry name" value="Znf_FYVE_PHD"/>
</dbReference>
<dbReference type="InterPro" id="IPR001965">
    <property type="entry name" value="Znf_PHD"/>
</dbReference>
<dbReference type="InterPro" id="IPR019787">
    <property type="entry name" value="Znf_PHD-finger"/>
</dbReference>
<dbReference type="InterPro" id="IPR013083">
    <property type="entry name" value="Znf_RING/FYVE/PHD"/>
</dbReference>
<dbReference type="PANTHER" id="PTHR10694:SF139">
    <property type="entry name" value="LID2 COMPLEX COMPONENT LID2"/>
    <property type="match status" value="1"/>
</dbReference>
<dbReference type="PANTHER" id="PTHR10694">
    <property type="entry name" value="LYSINE-SPECIFIC DEMETHYLASE"/>
    <property type="match status" value="1"/>
</dbReference>
<dbReference type="Pfam" id="PF01388">
    <property type="entry name" value="ARID"/>
    <property type="match status" value="1"/>
</dbReference>
<dbReference type="Pfam" id="PF02373">
    <property type="entry name" value="JmjC"/>
    <property type="match status" value="1"/>
</dbReference>
<dbReference type="Pfam" id="PF00628">
    <property type="entry name" value="PHD"/>
    <property type="match status" value="2"/>
</dbReference>
<dbReference type="Pfam" id="PF08429">
    <property type="entry name" value="PLU-1"/>
    <property type="match status" value="1"/>
</dbReference>
<dbReference type="Pfam" id="PF02928">
    <property type="entry name" value="zf-C5HC2"/>
    <property type="match status" value="1"/>
</dbReference>
<dbReference type="SMART" id="SM01014">
    <property type="entry name" value="ARID"/>
    <property type="match status" value="1"/>
</dbReference>
<dbReference type="SMART" id="SM00558">
    <property type="entry name" value="JmjC"/>
    <property type="match status" value="1"/>
</dbReference>
<dbReference type="SMART" id="SM00249">
    <property type="entry name" value="PHD"/>
    <property type="match status" value="3"/>
</dbReference>
<dbReference type="SUPFAM" id="SSF46774">
    <property type="entry name" value="ARID-like"/>
    <property type="match status" value="1"/>
</dbReference>
<dbReference type="SUPFAM" id="SSF51197">
    <property type="entry name" value="Clavaminate synthase-like"/>
    <property type="match status" value="1"/>
</dbReference>
<dbReference type="SUPFAM" id="SSF57903">
    <property type="entry name" value="FYVE/PHD zinc finger"/>
    <property type="match status" value="3"/>
</dbReference>
<dbReference type="PROSITE" id="PS51011">
    <property type="entry name" value="ARID"/>
    <property type="match status" value="1"/>
</dbReference>
<dbReference type="PROSITE" id="PS51184">
    <property type="entry name" value="JMJC"/>
    <property type="match status" value="1"/>
</dbReference>
<dbReference type="PROSITE" id="PS51183">
    <property type="entry name" value="JMJN"/>
    <property type="match status" value="1"/>
</dbReference>
<dbReference type="PROSITE" id="PS01359">
    <property type="entry name" value="ZF_PHD_1"/>
    <property type="match status" value="3"/>
</dbReference>
<dbReference type="PROSITE" id="PS50016">
    <property type="entry name" value="ZF_PHD_2"/>
    <property type="match status" value="3"/>
</dbReference>
<comment type="subunit">
    <text evidence="7 8">Component of the Lid2 complex composed of ash2, jmj3, lid2, sdc1 and snt2.</text>
</comment>
<comment type="interaction">
    <interactant intactId="EBI-2105919">
        <id>Q9HDV4</id>
    </interactant>
    <interactant intactId="EBI-904913">
        <id>O74910</id>
        <label>raf1</label>
    </interactant>
    <organismsDiffer>false</organismsDiffer>
    <experiments>2</experiments>
</comment>
<comment type="interaction">
    <interactant intactId="EBI-2105919">
        <id>Q9HDV4</id>
    </interactant>
    <interactant intactId="EBI-2106005">
        <id>Q9Y7R4</id>
        <label>set1</label>
    </interactant>
    <organismsDiffer>false</organismsDiffer>
    <experiments>2</experiments>
</comment>
<comment type="subcellular location">
    <subcellularLocation>
        <location evidence="10">Nucleus</location>
    </subcellularLocation>
</comment>
<feature type="chain" id="PRO_0000200599" description="Lid2 complex component lid2">
    <location>
        <begin position="1"/>
        <end position="1513"/>
    </location>
</feature>
<feature type="domain" description="JmjN" evidence="4">
    <location>
        <begin position="56"/>
        <end position="97"/>
    </location>
</feature>
<feature type="domain" description="ARID" evidence="3">
    <location>
        <begin position="121"/>
        <end position="212"/>
    </location>
</feature>
<feature type="domain" description="JmjC" evidence="5">
    <location>
        <begin position="408"/>
        <end position="574"/>
    </location>
</feature>
<feature type="zinc finger region" description="PHD-type 1" evidence="2">
    <location>
        <begin position="268"/>
        <end position="318"/>
    </location>
</feature>
<feature type="zinc finger region" description="PHD-type 2" evidence="2">
    <location>
        <begin position="1093"/>
        <end position="1145"/>
    </location>
</feature>
<feature type="zinc finger region" description="RING-type 1; degenerate" evidence="1">
    <location>
        <begin position="1096"/>
        <end position="1143"/>
    </location>
</feature>
<feature type="zinc finger region" description="PHD-type 3" evidence="2">
    <location>
        <begin position="1352"/>
        <end position="1403"/>
    </location>
</feature>
<feature type="zinc finger region" description="RING-type 2; degenerate" evidence="1">
    <location>
        <begin position="1354"/>
        <end position="1401"/>
    </location>
</feature>
<feature type="region of interest" description="Disordered" evidence="6">
    <location>
        <begin position="211"/>
        <end position="253"/>
    </location>
</feature>
<feature type="region of interest" description="Disordered" evidence="6">
    <location>
        <begin position="1063"/>
        <end position="1086"/>
    </location>
</feature>
<feature type="region of interest" description="Disordered" evidence="6">
    <location>
        <begin position="1244"/>
        <end position="1268"/>
    </location>
</feature>
<feature type="region of interest" description="Disordered" evidence="6">
    <location>
        <begin position="1280"/>
        <end position="1327"/>
    </location>
</feature>
<feature type="compositionally biased region" description="Polar residues" evidence="6">
    <location>
        <begin position="230"/>
        <end position="253"/>
    </location>
</feature>
<feature type="compositionally biased region" description="Basic and acidic residues" evidence="6">
    <location>
        <begin position="1076"/>
        <end position="1086"/>
    </location>
</feature>
<feature type="compositionally biased region" description="Basic residues" evidence="6">
    <location>
        <begin position="1257"/>
        <end position="1268"/>
    </location>
</feature>
<feature type="compositionally biased region" description="Basic and acidic residues" evidence="6">
    <location>
        <begin position="1301"/>
        <end position="1313"/>
    </location>
</feature>
<feature type="compositionally biased region" description="Polar residues" evidence="6">
    <location>
        <begin position="1316"/>
        <end position="1326"/>
    </location>
</feature>
<feature type="modified residue" description="Phosphoserine" evidence="9">
    <location>
        <position position="722"/>
    </location>
</feature>
<keyword id="KW-0238">DNA-binding</keyword>
<keyword id="KW-0479">Metal-binding</keyword>
<keyword id="KW-0539">Nucleus</keyword>
<keyword id="KW-0597">Phosphoprotein</keyword>
<keyword id="KW-1185">Reference proteome</keyword>
<keyword id="KW-0677">Repeat</keyword>
<keyword id="KW-0804">Transcription</keyword>
<keyword id="KW-0805">Transcription regulation</keyword>
<keyword id="KW-0862">Zinc</keyword>
<keyword id="KW-0863">Zinc-finger</keyword>
<reference evidence="11" key="1">
    <citation type="journal article" date="2002" name="Nature">
        <title>The genome sequence of Schizosaccharomyces pombe.</title>
        <authorList>
            <person name="Wood V."/>
            <person name="Gwilliam R."/>
            <person name="Rajandream M.A."/>
            <person name="Lyne M.H."/>
            <person name="Lyne R."/>
            <person name="Stewart A."/>
            <person name="Sgouros J.G."/>
            <person name="Peat N."/>
            <person name="Hayles J."/>
            <person name="Baker S.G."/>
            <person name="Basham D."/>
            <person name="Bowman S."/>
            <person name="Brooks K."/>
            <person name="Brown D."/>
            <person name="Brown S."/>
            <person name="Chillingworth T."/>
            <person name="Churcher C.M."/>
            <person name="Collins M."/>
            <person name="Connor R."/>
            <person name="Cronin A."/>
            <person name="Davis P."/>
            <person name="Feltwell T."/>
            <person name="Fraser A."/>
            <person name="Gentles S."/>
            <person name="Goble A."/>
            <person name="Hamlin N."/>
            <person name="Harris D.E."/>
            <person name="Hidalgo J."/>
            <person name="Hodgson G."/>
            <person name="Holroyd S."/>
            <person name="Hornsby T."/>
            <person name="Howarth S."/>
            <person name="Huckle E.J."/>
            <person name="Hunt S."/>
            <person name="Jagels K."/>
            <person name="James K.D."/>
            <person name="Jones L."/>
            <person name="Jones M."/>
            <person name="Leather S."/>
            <person name="McDonald S."/>
            <person name="McLean J."/>
            <person name="Mooney P."/>
            <person name="Moule S."/>
            <person name="Mungall K.L."/>
            <person name="Murphy L.D."/>
            <person name="Niblett D."/>
            <person name="Odell C."/>
            <person name="Oliver K."/>
            <person name="O'Neil S."/>
            <person name="Pearson D."/>
            <person name="Quail M.A."/>
            <person name="Rabbinowitsch E."/>
            <person name="Rutherford K.M."/>
            <person name="Rutter S."/>
            <person name="Saunders D."/>
            <person name="Seeger K."/>
            <person name="Sharp S."/>
            <person name="Skelton J."/>
            <person name="Simmonds M.N."/>
            <person name="Squares R."/>
            <person name="Squares S."/>
            <person name="Stevens K."/>
            <person name="Taylor K."/>
            <person name="Taylor R.G."/>
            <person name="Tivey A."/>
            <person name="Walsh S.V."/>
            <person name="Warren T."/>
            <person name="Whitehead S."/>
            <person name="Woodward J.R."/>
            <person name="Volckaert G."/>
            <person name="Aert R."/>
            <person name="Robben J."/>
            <person name="Grymonprez B."/>
            <person name="Weltjens I."/>
            <person name="Vanstreels E."/>
            <person name="Rieger M."/>
            <person name="Schaefer M."/>
            <person name="Mueller-Auer S."/>
            <person name="Gabel C."/>
            <person name="Fuchs M."/>
            <person name="Duesterhoeft A."/>
            <person name="Fritzc C."/>
            <person name="Holzer E."/>
            <person name="Moestl D."/>
            <person name="Hilbert H."/>
            <person name="Borzym K."/>
            <person name="Langer I."/>
            <person name="Beck A."/>
            <person name="Lehrach H."/>
            <person name="Reinhardt R."/>
            <person name="Pohl T.M."/>
            <person name="Eger P."/>
            <person name="Zimmermann W."/>
            <person name="Wedler H."/>
            <person name="Wambutt R."/>
            <person name="Purnelle B."/>
            <person name="Goffeau A."/>
            <person name="Cadieu E."/>
            <person name="Dreano S."/>
            <person name="Gloux S."/>
            <person name="Lelaure V."/>
            <person name="Mottier S."/>
            <person name="Galibert F."/>
            <person name="Aves S.J."/>
            <person name="Xiang Z."/>
            <person name="Hunt C."/>
            <person name="Moore K."/>
            <person name="Hurst S.M."/>
            <person name="Lucas M."/>
            <person name="Rochet M."/>
            <person name="Gaillardin C."/>
            <person name="Tallada V.A."/>
            <person name="Garzon A."/>
            <person name="Thode G."/>
            <person name="Daga R.R."/>
            <person name="Cruzado L."/>
            <person name="Jimenez J."/>
            <person name="Sanchez M."/>
            <person name="del Rey F."/>
            <person name="Benito J."/>
            <person name="Dominguez A."/>
            <person name="Revuelta J.L."/>
            <person name="Moreno S."/>
            <person name="Armstrong J."/>
            <person name="Forsburg S.L."/>
            <person name="Cerutti L."/>
            <person name="Lowe T."/>
            <person name="McCombie W.R."/>
            <person name="Paulsen I."/>
            <person name="Potashkin J."/>
            <person name="Shpakovski G.V."/>
            <person name="Ussery D."/>
            <person name="Barrell B.G."/>
            <person name="Nurse P."/>
        </authorList>
    </citation>
    <scope>NUCLEOTIDE SEQUENCE [LARGE SCALE GENOMIC DNA]</scope>
    <source>
        <strain>972 / ATCC 24843</strain>
    </source>
</reference>
<reference evidence="10" key="2">
    <citation type="journal article" date="2003" name="J. Biol. Chem.">
        <title>High conservation of the Set1/Rad6 axis of histone 3 lysine 4 methylation in budding and fission yeasts.</title>
        <authorList>
            <person name="Roguev A."/>
            <person name="Schaft D."/>
            <person name="Shevchenko A."/>
            <person name="Aasland R."/>
            <person name="Shevchenko A."/>
            <person name="Stewart A.F."/>
        </authorList>
    </citation>
    <scope>COMPOSITION OF THE LID2 COMPLEX</scope>
</reference>
<reference evidence="10" key="3">
    <citation type="journal article" date="2004" name="Mol. Cell. Proteomics">
        <title>A comparative analysis of an orthologous proteomic environment in the yeasts Saccharomyces cerevisiae and Schizosaccharomyces pombe.</title>
        <authorList>
            <person name="Roguev A."/>
            <person name="Shevchenko A."/>
            <person name="Schaft D."/>
            <person name="Thomas H."/>
            <person name="Stewart A.F."/>
            <person name="Shevchenko A."/>
        </authorList>
    </citation>
    <scope>COMPOSITION OF THE LID2 COMPLEX</scope>
</reference>
<reference key="4">
    <citation type="journal article" date="2008" name="J. Proteome Res.">
        <title>Phosphoproteome analysis of fission yeast.</title>
        <authorList>
            <person name="Wilson-Grady J.T."/>
            <person name="Villen J."/>
            <person name="Gygi S.P."/>
        </authorList>
    </citation>
    <scope>PHOSPHORYLATION [LARGE SCALE ANALYSIS] AT SER-722</scope>
    <scope>IDENTIFICATION BY MASS SPECTROMETRY</scope>
</reference>
<sequence length="1513" mass="172259">MICQLLWHEHNSMGSGREKKIRKLGDNFSLPYLKFDCDHNDKNYRASNRPFGLSTGLSVQLNASNMTDPFKFLLDNWHTIFKNGAIKLLPPEGWQIPVVLDQGAFEFQSKRQCLNKGCLNYEKNYDYFKKLKAFHESRGLYFYHPPIIGNRPVDFLRLRNAISKFTNSGSSLNNEILHKVIIYLRLEDTKEVRQVLTRCYDRYIKPFERDSSPSFKSKRSESSTRKIRNTRSSAQQESPIPETSAQSPVQTIQVNGSTSLKRPLIERGEQCEYCGLDKNPETILLCDGCEAAYHTSCLDPPLTSIPKEDWYCDACKFNISDYDPRKGFKWKLSSLKERSAEIFNTLGERNSSSKLTNLTEDDIELFYWSSLAESNSGFAPLELEGLSQAYTSTIQSSLPSKEVFPLEKYSSEPWNLHNLPFENPCLFNYSFSDLSSLTITRLSIGMVFYTHGWTKSSLSTGLLHHHRFGDTVTWYVLPPDESDAFERYLISSYPQYTMEDLNRSNGLPVIVSPSSLIENGFHPIAIDLRPNEFLVVSPNSYHMGFHQGFSSFESVNFATVNWIKDGLLNSSISVLKSMRIPSSVSYEAVIISMVLSKNPCFSSEWLIKCFEDMIANESASKNEIMKLVPNIQALKLESSVPLEIRCSNCKQPCFLSFMQCHEPKKFICLGDCVKEVSLNATSWMLFYRWDVHELSNLAERFVSLIRGPEEWTNRLRSVLSTSPKPQLKVLKSLLVDAEKAMLTTPETVNLRDFVQNANSWIDSVNECLKVASLKRKKDKKPPLFKAHDHWNNTSNLKDSAVLFKVLQTSRSMAFTCQEIENMKQKAFDLLEFRNRLINSFSGPLDKNTCQRLLTEAELLGFTIPELGIIQKYLIQFEWLDMFYSFETTRTTDSDLERLITYGVSAGIPEDNDYMIFAKAMKGRAEIWENQVYDTLSKSNISYDKLSLLRDEAMNLCVNKELFSKVVGILNNAEEIKNKIATLCERSQEKDFALRPSIDEVKEALASAEKLPILSESTVTLQKMYDVVLEWIRRGKRLFGKANAPLEILGQHLDYVEKRNSASLSLNDRPGPPMEPASRETSPDSEGRLTIRKKKGCIFCFCRLPESGVMIECEICHEWYHAKCLKMSKKKLRQDEKFTCPICDYRVEIPRLSNRPKLEDLQSLYKDVKLLPFQPKETETLRKVVDLASKFRQEMQALAHNPFGLTMAEVPLARFYLRKMEGAEILLVDETNLFRQKLHECVPIAPNPPPIIGESKSTRKPRPTKRQRQIMKQVAEGLLPASAIAPPKSSNEKKSSNNVKAVEAETKSKSEKSPKKNGTNISDANNKNESHVSLMKNWKLGSPAFVTLVKEKNSSCLCGEEFSPRDSFIDCTICERRFHYDCVGLNNEIADSVSKFTCPICMEQSGGIYPWQLRPRNGMHPDHISGFSKEVETDPKLGSSGYTLNNSKFDKAAVSKTLSAQDVSRLQKVSCGEHLYFGTDVFTPLGDMATSASMFSLDDSSEKTDAFTENFLNV</sequence>
<name>LID2_SCHPO</name>
<proteinExistence type="evidence at protein level"/>